<feature type="propeptide" id="PRO_0000459859" evidence="1">
    <location>
        <begin position="1"/>
        <end position="9"/>
    </location>
</feature>
<feature type="chain" id="PRO_1000081874" description="Large ribosomal subunit protein bL27">
    <location>
        <begin position="10"/>
        <end position="96"/>
    </location>
</feature>
<feature type="region of interest" description="Disordered" evidence="3">
    <location>
        <begin position="14"/>
        <end position="35"/>
    </location>
</feature>
<accession>A7GTC2</accession>
<reference key="1">
    <citation type="journal article" date="2008" name="Chem. Biol. Interact.">
        <title>Extending the Bacillus cereus group genomics to putative food-borne pathogens of different toxicity.</title>
        <authorList>
            <person name="Lapidus A."/>
            <person name="Goltsman E."/>
            <person name="Auger S."/>
            <person name="Galleron N."/>
            <person name="Segurens B."/>
            <person name="Dossat C."/>
            <person name="Land M.L."/>
            <person name="Broussolle V."/>
            <person name="Brillard J."/>
            <person name="Guinebretiere M.-H."/>
            <person name="Sanchis V."/>
            <person name="Nguen-the C."/>
            <person name="Lereclus D."/>
            <person name="Richardson P."/>
            <person name="Wincker P."/>
            <person name="Weissenbach J."/>
            <person name="Ehrlich S.D."/>
            <person name="Sorokin A."/>
        </authorList>
    </citation>
    <scope>NUCLEOTIDE SEQUENCE [LARGE SCALE GENOMIC DNA]</scope>
    <source>
        <strain>DSM 22905 / CIP 110041 / 391-98 / NVH 391-98</strain>
    </source>
</reference>
<comment type="PTM">
    <text evidence="1">The N-terminus is cleaved by ribosomal processing cysteine protease Prp.</text>
</comment>
<comment type="similarity">
    <text evidence="2">Belongs to the bacterial ribosomal protein bL27 family.</text>
</comment>
<keyword id="KW-0687">Ribonucleoprotein</keyword>
<keyword id="KW-0689">Ribosomal protein</keyword>
<evidence type="ECO:0000250" key="1">
    <source>
        <dbReference type="UniProtKB" id="Q2FXT0"/>
    </source>
</evidence>
<evidence type="ECO:0000255" key="2">
    <source>
        <dbReference type="HAMAP-Rule" id="MF_00539"/>
    </source>
</evidence>
<evidence type="ECO:0000256" key="3">
    <source>
        <dbReference type="SAM" id="MobiDB-lite"/>
    </source>
</evidence>
<evidence type="ECO:0000305" key="4"/>
<name>RL27_BACCN</name>
<dbReference type="EMBL" id="CP000764">
    <property type="protein sequence ID" value="ABS23380.1"/>
    <property type="molecule type" value="Genomic_DNA"/>
</dbReference>
<dbReference type="RefSeq" id="WP_012095617.1">
    <property type="nucleotide sequence ID" value="NC_009674.1"/>
</dbReference>
<dbReference type="SMR" id="A7GTC2"/>
<dbReference type="STRING" id="315749.Bcer98_3157"/>
<dbReference type="GeneID" id="92823084"/>
<dbReference type="KEGG" id="bcy:Bcer98_3157"/>
<dbReference type="eggNOG" id="COG0211">
    <property type="taxonomic scope" value="Bacteria"/>
</dbReference>
<dbReference type="HOGENOM" id="CLU_095424_4_0_9"/>
<dbReference type="Proteomes" id="UP000002300">
    <property type="component" value="Chromosome"/>
</dbReference>
<dbReference type="GO" id="GO:0022625">
    <property type="term" value="C:cytosolic large ribosomal subunit"/>
    <property type="evidence" value="ECO:0007669"/>
    <property type="project" value="TreeGrafter"/>
</dbReference>
<dbReference type="GO" id="GO:0003735">
    <property type="term" value="F:structural constituent of ribosome"/>
    <property type="evidence" value="ECO:0007669"/>
    <property type="project" value="InterPro"/>
</dbReference>
<dbReference type="GO" id="GO:0006412">
    <property type="term" value="P:translation"/>
    <property type="evidence" value="ECO:0007669"/>
    <property type="project" value="UniProtKB-UniRule"/>
</dbReference>
<dbReference type="FunFam" id="2.40.50.100:FF:000004">
    <property type="entry name" value="50S ribosomal protein L27"/>
    <property type="match status" value="1"/>
</dbReference>
<dbReference type="Gene3D" id="2.40.50.100">
    <property type="match status" value="1"/>
</dbReference>
<dbReference type="HAMAP" id="MF_00539">
    <property type="entry name" value="Ribosomal_bL27"/>
    <property type="match status" value="1"/>
</dbReference>
<dbReference type="InterPro" id="IPR001684">
    <property type="entry name" value="Ribosomal_bL27"/>
</dbReference>
<dbReference type="InterPro" id="IPR018261">
    <property type="entry name" value="Ribosomal_bL27_CS"/>
</dbReference>
<dbReference type="NCBIfam" id="TIGR00062">
    <property type="entry name" value="L27"/>
    <property type="match status" value="1"/>
</dbReference>
<dbReference type="PANTHER" id="PTHR15893:SF0">
    <property type="entry name" value="LARGE RIBOSOMAL SUBUNIT PROTEIN BL27M"/>
    <property type="match status" value="1"/>
</dbReference>
<dbReference type="PANTHER" id="PTHR15893">
    <property type="entry name" value="RIBOSOMAL PROTEIN L27"/>
    <property type="match status" value="1"/>
</dbReference>
<dbReference type="Pfam" id="PF01016">
    <property type="entry name" value="Ribosomal_L27"/>
    <property type="match status" value="1"/>
</dbReference>
<dbReference type="PRINTS" id="PR00063">
    <property type="entry name" value="RIBOSOMALL27"/>
</dbReference>
<dbReference type="SUPFAM" id="SSF110324">
    <property type="entry name" value="Ribosomal L27 protein-like"/>
    <property type="match status" value="1"/>
</dbReference>
<dbReference type="PROSITE" id="PS00831">
    <property type="entry name" value="RIBOSOMAL_L27"/>
    <property type="match status" value="1"/>
</dbReference>
<gene>
    <name evidence="2" type="primary">rpmA</name>
    <name type="ordered locus">Bcer98_3157</name>
</gene>
<organism>
    <name type="scientific">Bacillus cytotoxicus (strain DSM 22905 / CIP 110041 / 391-98 / NVH 391-98)</name>
    <dbReference type="NCBI Taxonomy" id="315749"/>
    <lineage>
        <taxon>Bacteria</taxon>
        <taxon>Bacillati</taxon>
        <taxon>Bacillota</taxon>
        <taxon>Bacilli</taxon>
        <taxon>Bacillales</taxon>
        <taxon>Bacillaceae</taxon>
        <taxon>Bacillus</taxon>
        <taxon>Bacillus cereus group</taxon>
    </lineage>
</organism>
<protein>
    <recommendedName>
        <fullName evidence="2">Large ribosomal subunit protein bL27</fullName>
    </recommendedName>
    <alternativeName>
        <fullName evidence="4">50S ribosomal protein L27</fullName>
    </alternativeName>
</protein>
<proteinExistence type="inferred from homology"/>
<sequence length="96" mass="10535">MLRLDLQFFASKKGVGSTKNGRDSQSKRLGAKRADGQMVTGGSILYRQRGTKIYPGVNVGRGGDDTLYAKVDGVVRFERLGRDRKQVSVYPVAQEA</sequence>